<protein>
    <recommendedName>
        <fullName>Nuclear speckle splicing regulatory protein 1</fullName>
    </recommendedName>
    <alternativeName>
        <fullName>Coiled-coil domain-containing protein 55</fullName>
    </alternativeName>
    <alternativeName>
        <fullName>Nuclear speckle-related protein 70</fullName>
        <shortName>NSrp70</shortName>
    </alternativeName>
</protein>
<gene>
    <name type="primary">Nsrp1</name>
    <name type="synonym">Ccdc55</name>
    <name type="synonym">Nsrp70</name>
</gene>
<proteinExistence type="evidence at protein level"/>
<name>NSRP1_RAT</name>
<keyword id="KW-0007">Acetylation</keyword>
<keyword id="KW-0175">Coiled coil</keyword>
<keyword id="KW-1017">Isopeptide bond</keyword>
<keyword id="KW-0507">mRNA processing</keyword>
<keyword id="KW-0508">mRNA splicing</keyword>
<keyword id="KW-0539">Nucleus</keyword>
<keyword id="KW-0597">Phosphoprotein</keyword>
<keyword id="KW-1185">Reference proteome</keyword>
<keyword id="KW-0694">RNA-binding</keyword>
<keyword id="KW-0832">Ubl conjugation</keyword>
<reference key="1">
    <citation type="journal article" date="2004" name="Genome Res.">
        <title>The status, quality, and expansion of the NIH full-length cDNA project: the Mammalian Gene Collection (MGC).</title>
        <authorList>
            <consortium name="The MGC Project Team"/>
        </authorList>
    </citation>
    <scope>NUCLEOTIDE SEQUENCE [LARGE SCALE MRNA]</scope>
    <source>
        <tissue>Placenta</tissue>
    </source>
</reference>
<reference key="2">
    <citation type="journal article" date="2012" name="Nat. Commun.">
        <title>Quantitative maps of protein phosphorylation sites across 14 different rat organs and tissues.</title>
        <authorList>
            <person name="Lundby A."/>
            <person name="Secher A."/>
            <person name="Lage K."/>
            <person name="Nordsborg N.B."/>
            <person name="Dmytriyev A."/>
            <person name="Lundby C."/>
            <person name="Olsen J.V."/>
        </authorList>
    </citation>
    <scope>PHOSPHORYLATION [LARGE SCALE ANALYSIS] AT SER-33 AND SER-447</scope>
    <scope>IDENTIFICATION BY MASS SPECTROMETRY [LARGE SCALE ANALYSIS]</scope>
</reference>
<accession>Q4FZU3</accession>
<organism>
    <name type="scientific">Rattus norvegicus</name>
    <name type="common">Rat</name>
    <dbReference type="NCBI Taxonomy" id="10116"/>
    <lineage>
        <taxon>Eukaryota</taxon>
        <taxon>Metazoa</taxon>
        <taxon>Chordata</taxon>
        <taxon>Craniata</taxon>
        <taxon>Vertebrata</taxon>
        <taxon>Euteleostomi</taxon>
        <taxon>Mammalia</taxon>
        <taxon>Eutheria</taxon>
        <taxon>Euarchontoglires</taxon>
        <taxon>Glires</taxon>
        <taxon>Rodentia</taxon>
        <taxon>Myomorpha</taxon>
        <taxon>Muroidea</taxon>
        <taxon>Muridae</taxon>
        <taxon>Murinae</taxon>
        <taxon>Rattus</taxon>
    </lineage>
</organism>
<sequence>MAIPGRQYGLILPKKTQPLNRVLQKPSVFGNDSDDDEASVSESLQREAAKKQAMRQTKLEIQKALAEDSTVYEYDSIYDEMQKKKEENNPKLLMGKDRKPKYIHNLLKAVEIRKKEQEKRMEKKIQREREMEKGEFDDKEAFVTSAYKKKLEERAEEEEREKRAAALEARLDVTKQKDLSGFYRHLLNQAVGEEAVPKSSFREARTVIKEEKLRGYPDETNSENRPQQNCALQSGVEEAEENPDADSDSEESCDDGERGDHKVKSRGEEDTGASTKYLKHHKNHTHSRSSSEEGGLSTKYHSRSSQSRGHEHKGGQHQDRQSRDQESCHKDRSHREEKSSHRHREASHKDHHWKRHEHEDKPKGRGQGERQDREWKREKYSSREQEKDRQWNDHDRYSEKEKKGKEKEEHRKARRERCEDGAKYRERKKPEGSGQSSERHRDRRESSPRPRPEDDLLDQERSSKARNTEKDKGEQGKPPRSETSLATKHRLTEERPEKGSQPERPPEAVSKFAKRSNEETVMSARDRYLARQMARINAKTYIEKEDD</sequence>
<feature type="chain" id="PRO_0000240436" description="Nuclear speckle splicing regulatory protein 1">
    <location>
        <begin position="1"/>
        <end position="547"/>
    </location>
</feature>
<feature type="region of interest" description="Disordered" evidence="5">
    <location>
        <begin position="25"/>
        <end position="51"/>
    </location>
</feature>
<feature type="region of interest" description="Necessary for alternative splicing activity" evidence="1">
    <location>
        <begin position="105"/>
        <end position="169"/>
    </location>
</feature>
<feature type="region of interest" description="Disordered" evidence="5">
    <location>
        <begin position="188"/>
        <end position="523"/>
    </location>
</feature>
<feature type="coiled-coil region" evidence="4">
    <location>
        <begin position="103"/>
        <end position="177"/>
    </location>
</feature>
<feature type="coiled-coil region" evidence="4">
    <location>
        <begin position="376"/>
        <end position="417"/>
    </location>
</feature>
<feature type="compositionally biased region" description="Basic and acidic residues" evidence="5">
    <location>
        <begin position="200"/>
        <end position="217"/>
    </location>
</feature>
<feature type="compositionally biased region" description="Polar residues" evidence="5">
    <location>
        <begin position="223"/>
        <end position="232"/>
    </location>
</feature>
<feature type="compositionally biased region" description="Acidic residues" evidence="5">
    <location>
        <begin position="237"/>
        <end position="254"/>
    </location>
</feature>
<feature type="compositionally biased region" description="Basic and acidic residues" evidence="5">
    <location>
        <begin position="255"/>
        <end position="269"/>
    </location>
</feature>
<feature type="compositionally biased region" description="Basic residues" evidence="5">
    <location>
        <begin position="277"/>
        <end position="287"/>
    </location>
</feature>
<feature type="compositionally biased region" description="Basic and acidic residues" evidence="5">
    <location>
        <begin position="308"/>
        <end position="339"/>
    </location>
</feature>
<feature type="compositionally biased region" description="Basic residues" evidence="5">
    <location>
        <begin position="340"/>
        <end position="355"/>
    </location>
</feature>
<feature type="compositionally biased region" description="Basic and acidic residues" evidence="5">
    <location>
        <begin position="356"/>
        <end position="480"/>
    </location>
</feature>
<feature type="compositionally biased region" description="Basic and acidic residues" evidence="5">
    <location>
        <begin position="490"/>
        <end position="506"/>
    </location>
</feature>
<feature type="modified residue" description="Phosphoserine" evidence="3">
    <location>
        <position position="27"/>
    </location>
</feature>
<feature type="modified residue" description="Phosphoserine" evidence="7">
    <location>
        <position position="33"/>
    </location>
</feature>
<feature type="modified residue" description="Phosphoserine" evidence="3">
    <location>
        <position position="247"/>
    </location>
</feature>
<feature type="modified residue" description="Phosphoserine" evidence="3">
    <location>
        <position position="252"/>
    </location>
</feature>
<feature type="modified residue" description="N6-acetyllysine" evidence="2">
    <location>
        <position position="276"/>
    </location>
</feature>
<feature type="modified residue" description="Phosphoserine" evidence="7">
    <location>
        <position position="447"/>
    </location>
</feature>
<feature type="cross-link" description="Glycyl lysine isopeptide (Lys-Gly) (interchain with G-Cter in SUMO2)" evidence="3">
    <location>
        <position position="198"/>
    </location>
</feature>
<feature type="cross-link" description="Glycyl lysine isopeptide (Lys-Gly) (interchain with G-Cter in SUMO2)" evidence="3">
    <location>
        <position position="209"/>
    </location>
</feature>
<feature type="cross-link" description="Glycyl lysine isopeptide (Lys-Gly) (interchain with G-Cter in SUMO2)" evidence="3">
    <location>
        <position position="279"/>
    </location>
</feature>
<dbReference type="EMBL" id="BC099120">
    <property type="protein sequence ID" value="AAH99120.1"/>
    <property type="molecule type" value="mRNA"/>
</dbReference>
<dbReference type="RefSeq" id="NP_001032266.1">
    <property type="nucleotide sequence ID" value="NM_001037189.1"/>
</dbReference>
<dbReference type="SMR" id="Q4FZU3"/>
<dbReference type="FunCoup" id="Q4FZU3">
    <property type="interactions" value="2317"/>
</dbReference>
<dbReference type="STRING" id="10116.ENSRNOP00000036224"/>
<dbReference type="iPTMnet" id="Q4FZU3"/>
<dbReference type="PhosphoSitePlus" id="Q4FZU3"/>
<dbReference type="PaxDb" id="10116-ENSRNOP00000036224"/>
<dbReference type="Ensembl" id="ENSRNOT00000107073.1">
    <property type="protein sequence ID" value="ENSRNOP00000087935.1"/>
    <property type="gene ID" value="ENSRNOG00000062400.1"/>
</dbReference>
<dbReference type="GeneID" id="303346"/>
<dbReference type="KEGG" id="rno:303346"/>
<dbReference type="AGR" id="RGD:1309863"/>
<dbReference type="CTD" id="84081"/>
<dbReference type="RGD" id="1309863">
    <property type="gene designation" value="Nsrp1"/>
</dbReference>
<dbReference type="eggNOG" id="KOG2117">
    <property type="taxonomic scope" value="Eukaryota"/>
</dbReference>
<dbReference type="GeneTree" id="ENSGT00940000154049"/>
<dbReference type="HOGENOM" id="CLU_548527_0_0_1"/>
<dbReference type="InParanoid" id="Q4FZU3"/>
<dbReference type="OrthoDB" id="446635at2759"/>
<dbReference type="PhylomeDB" id="Q4FZU3"/>
<dbReference type="TreeFam" id="TF319359"/>
<dbReference type="Reactome" id="R-RNO-72163">
    <property type="pathway name" value="mRNA Splicing - Major Pathway"/>
</dbReference>
<dbReference type="PRO" id="PR:Q4FZU3"/>
<dbReference type="Proteomes" id="UP000002494">
    <property type="component" value="Chromosome 10"/>
</dbReference>
<dbReference type="Bgee" id="ENSRNOG00000022502">
    <property type="expression patterns" value="Expressed in lung and 19 other cell types or tissues"/>
</dbReference>
<dbReference type="GO" id="GO:0016607">
    <property type="term" value="C:nuclear speck"/>
    <property type="evidence" value="ECO:0000250"/>
    <property type="project" value="UniProtKB"/>
</dbReference>
<dbReference type="GO" id="GO:0005634">
    <property type="term" value="C:nucleus"/>
    <property type="evidence" value="ECO:0000250"/>
    <property type="project" value="UniProtKB"/>
</dbReference>
<dbReference type="GO" id="GO:1990904">
    <property type="term" value="C:ribonucleoprotein complex"/>
    <property type="evidence" value="ECO:0000250"/>
    <property type="project" value="UniProtKB"/>
</dbReference>
<dbReference type="GO" id="GO:0003729">
    <property type="term" value="F:mRNA binding"/>
    <property type="evidence" value="ECO:0000250"/>
    <property type="project" value="UniProtKB"/>
</dbReference>
<dbReference type="GO" id="GO:0032502">
    <property type="term" value="P:developmental process"/>
    <property type="evidence" value="ECO:0000250"/>
    <property type="project" value="UniProtKB"/>
</dbReference>
<dbReference type="GO" id="GO:0001701">
    <property type="term" value="P:in utero embryonic development"/>
    <property type="evidence" value="ECO:0000266"/>
    <property type="project" value="RGD"/>
</dbReference>
<dbReference type="GO" id="GO:0006397">
    <property type="term" value="P:mRNA processing"/>
    <property type="evidence" value="ECO:0007669"/>
    <property type="project" value="UniProtKB-KW"/>
</dbReference>
<dbReference type="GO" id="GO:0000381">
    <property type="term" value="P:regulation of alternative mRNA splicing, via spliceosome"/>
    <property type="evidence" value="ECO:0000250"/>
    <property type="project" value="UniProtKB"/>
</dbReference>
<dbReference type="GO" id="GO:0008380">
    <property type="term" value="P:RNA splicing"/>
    <property type="evidence" value="ECO:0007669"/>
    <property type="project" value="UniProtKB-KW"/>
</dbReference>
<dbReference type="InterPro" id="IPR046850">
    <property type="entry name" value="NRP1_C"/>
</dbReference>
<dbReference type="InterPro" id="IPR042816">
    <property type="entry name" value="Nsrp1"/>
</dbReference>
<dbReference type="InterPro" id="IPR018612">
    <property type="entry name" value="NSRP1_N"/>
</dbReference>
<dbReference type="PANTHER" id="PTHR31938">
    <property type="entry name" value="NUCLEAR SPECKLE SPLICING REGULATORY PROTEIN 1"/>
    <property type="match status" value="1"/>
</dbReference>
<dbReference type="PANTHER" id="PTHR31938:SF4">
    <property type="entry name" value="NUCLEAR SPECKLE SPLICING REGULATORY PROTEIN 1"/>
    <property type="match status" value="1"/>
</dbReference>
<dbReference type="Pfam" id="PF20427">
    <property type="entry name" value="NRP1_C"/>
    <property type="match status" value="1"/>
</dbReference>
<dbReference type="Pfam" id="PF09745">
    <property type="entry name" value="NSRP1_N"/>
    <property type="match status" value="1"/>
</dbReference>
<evidence type="ECO:0000250" key="1"/>
<evidence type="ECO:0000250" key="2">
    <source>
        <dbReference type="UniProtKB" id="Q5NCR9"/>
    </source>
</evidence>
<evidence type="ECO:0000250" key="3">
    <source>
        <dbReference type="UniProtKB" id="Q9H0G5"/>
    </source>
</evidence>
<evidence type="ECO:0000255" key="4"/>
<evidence type="ECO:0000256" key="5">
    <source>
        <dbReference type="SAM" id="MobiDB-lite"/>
    </source>
</evidence>
<evidence type="ECO:0000305" key="6"/>
<evidence type="ECO:0007744" key="7">
    <source>
    </source>
</evidence>
<comment type="function">
    <text evidence="1">RNA-binding protein that mediates pre-mRNA alternative splicing regulation.</text>
</comment>
<comment type="subunit">
    <text evidence="1">Interacts (via C-terminus) with SRSF1. Interacts (via C-terminus) with SRSF2 (By similarity).</text>
</comment>
<comment type="subcellular location">
    <subcellularLocation>
        <location evidence="1">Nucleus</location>
    </subcellularLocation>
    <subcellularLocation>
        <location evidence="1">Nucleus speckle</location>
    </subcellularLocation>
    <text evidence="1">Colocalizes with splicing factors SRSF1 and SRSF2 in speckles.</text>
</comment>
<comment type="similarity">
    <text evidence="6">Belongs to the NSRP1 family.</text>
</comment>